<evidence type="ECO:0000250" key="1"/>
<evidence type="ECO:0000305" key="2"/>
<sequence length="92" mass="10582">MTRSLKKNPFVANHLLRKINKLNTKAEKDIIITWSRASTIIPTMIGHTIAIHNGKEHLPIYITDRMVGHKLGEFSPTLNFRGHAKNDNRSRR</sequence>
<protein>
    <recommendedName>
        <fullName evidence="2">Small ribosomal subunit protein uS19c</fullName>
    </recommendedName>
    <alternativeName>
        <fullName>30S ribosomal protein S19, chloroplastic</fullName>
    </alternativeName>
</protein>
<feature type="initiator methionine" description="Removed" evidence="1">
    <location>
        <position position="1"/>
    </location>
</feature>
<feature type="chain" id="PRO_0000129992" description="Small ribosomal subunit protein uS19c">
    <location>
        <begin position="2"/>
        <end position="92"/>
    </location>
</feature>
<dbReference type="EMBL" id="X06429">
    <property type="protein sequence ID" value="CAA29736.2"/>
    <property type="molecule type" value="Genomic_DNA"/>
</dbReference>
<dbReference type="EMBL" id="DQ317523">
    <property type="protein sequence ID" value="ABC25162.1"/>
    <property type="molecule type" value="Genomic_DNA"/>
</dbReference>
<dbReference type="PIR" id="S00719">
    <property type="entry name" value="R3SY19"/>
</dbReference>
<dbReference type="RefSeq" id="YP_538804.1">
    <property type="nucleotide sequence ID" value="NC_007942.1"/>
</dbReference>
<dbReference type="SMR" id="P07816"/>
<dbReference type="FunCoup" id="P07816">
    <property type="interactions" value="127"/>
</dbReference>
<dbReference type="STRING" id="3847.P07816"/>
<dbReference type="PaxDb" id="3847-GLYMA18G08750.1"/>
<dbReference type="GeneID" id="3989336"/>
<dbReference type="KEGG" id="gmx:3989336"/>
<dbReference type="eggNOG" id="KOG0899">
    <property type="taxonomic scope" value="Eukaryota"/>
</dbReference>
<dbReference type="InParanoid" id="P07816"/>
<dbReference type="Proteomes" id="UP000008827">
    <property type="component" value="Chloroplast"/>
</dbReference>
<dbReference type="GO" id="GO:0009507">
    <property type="term" value="C:chloroplast"/>
    <property type="evidence" value="ECO:0007669"/>
    <property type="project" value="UniProtKB-SubCell"/>
</dbReference>
<dbReference type="GO" id="GO:0005763">
    <property type="term" value="C:mitochondrial small ribosomal subunit"/>
    <property type="evidence" value="ECO:0000318"/>
    <property type="project" value="GO_Central"/>
</dbReference>
<dbReference type="GO" id="GO:0019843">
    <property type="term" value="F:rRNA binding"/>
    <property type="evidence" value="ECO:0007669"/>
    <property type="project" value="UniProtKB-UniRule"/>
</dbReference>
<dbReference type="GO" id="GO:0003735">
    <property type="term" value="F:structural constituent of ribosome"/>
    <property type="evidence" value="ECO:0000318"/>
    <property type="project" value="GO_Central"/>
</dbReference>
<dbReference type="GO" id="GO:0000028">
    <property type="term" value="P:ribosomal small subunit assembly"/>
    <property type="evidence" value="ECO:0000318"/>
    <property type="project" value="GO_Central"/>
</dbReference>
<dbReference type="GO" id="GO:0006412">
    <property type="term" value="P:translation"/>
    <property type="evidence" value="ECO:0007669"/>
    <property type="project" value="UniProtKB-UniRule"/>
</dbReference>
<dbReference type="FunFam" id="3.30.860.10:FF:000001">
    <property type="entry name" value="30S ribosomal protein S19"/>
    <property type="match status" value="1"/>
</dbReference>
<dbReference type="Gene3D" id="3.30.860.10">
    <property type="entry name" value="30s Ribosomal Protein S19, Chain A"/>
    <property type="match status" value="1"/>
</dbReference>
<dbReference type="HAMAP" id="MF_00531">
    <property type="entry name" value="Ribosomal_uS19"/>
    <property type="match status" value="1"/>
</dbReference>
<dbReference type="InterPro" id="IPR002222">
    <property type="entry name" value="Ribosomal_uS19"/>
</dbReference>
<dbReference type="InterPro" id="IPR005732">
    <property type="entry name" value="Ribosomal_uS19_bac-type"/>
</dbReference>
<dbReference type="InterPro" id="IPR020934">
    <property type="entry name" value="Ribosomal_uS19_CS"/>
</dbReference>
<dbReference type="InterPro" id="IPR023575">
    <property type="entry name" value="Ribosomal_uS19_SF"/>
</dbReference>
<dbReference type="NCBIfam" id="TIGR01050">
    <property type="entry name" value="rpsS_bact"/>
    <property type="match status" value="1"/>
</dbReference>
<dbReference type="PANTHER" id="PTHR11880">
    <property type="entry name" value="RIBOSOMAL PROTEIN S19P FAMILY MEMBER"/>
    <property type="match status" value="1"/>
</dbReference>
<dbReference type="PANTHER" id="PTHR11880:SF8">
    <property type="entry name" value="SMALL RIBOSOMAL SUBUNIT PROTEIN US19M"/>
    <property type="match status" value="1"/>
</dbReference>
<dbReference type="Pfam" id="PF00203">
    <property type="entry name" value="Ribosomal_S19"/>
    <property type="match status" value="1"/>
</dbReference>
<dbReference type="PIRSF" id="PIRSF002144">
    <property type="entry name" value="Ribosomal_S19"/>
    <property type="match status" value="1"/>
</dbReference>
<dbReference type="PRINTS" id="PR00975">
    <property type="entry name" value="RIBOSOMALS19"/>
</dbReference>
<dbReference type="SUPFAM" id="SSF54570">
    <property type="entry name" value="Ribosomal protein S19"/>
    <property type="match status" value="1"/>
</dbReference>
<dbReference type="PROSITE" id="PS00323">
    <property type="entry name" value="RIBOSOMAL_S19"/>
    <property type="match status" value="1"/>
</dbReference>
<comment type="function">
    <text evidence="1">Protein S19 forms a complex with S13 that binds strongly to the 16S ribosomal RNA.</text>
</comment>
<comment type="subcellular location">
    <subcellularLocation>
        <location>Plastid</location>
        <location>Chloroplast</location>
    </subcellularLocation>
</comment>
<comment type="similarity">
    <text evidence="2">Belongs to the universal ribosomal protein uS19 family.</text>
</comment>
<organism>
    <name type="scientific">Glycine max</name>
    <name type="common">Soybean</name>
    <name type="synonym">Glycine hispida</name>
    <dbReference type="NCBI Taxonomy" id="3847"/>
    <lineage>
        <taxon>Eukaryota</taxon>
        <taxon>Viridiplantae</taxon>
        <taxon>Streptophyta</taxon>
        <taxon>Embryophyta</taxon>
        <taxon>Tracheophyta</taxon>
        <taxon>Spermatophyta</taxon>
        <taxon>Magnoliopsida</taxon>
        <taxon>eudicotyledons</taxon>
        <taxon>Gunneridae</taxon>
        <taxon>Pentapetalae</taxon>
        <taxon>rosids</taxon>
        <taxon>fabids</taxon>
        <taxon>Fabales</taxon>
        <taxon>Fabaceae</taxon>
        <taxon>Papilionoideae</taxon>
        <taxon>50 kb inversion clade</taxon>
        <taxon>NPAAA clade</taxon>
        <taxon>indigoferoid/millettioid clade</taxon>
        <taxon>Phaseoleae</taxon>
        <taxon>Glycine</taxon>
        <taxon>Glycine subgen. Soja</taxon>
    </lineage>
</organism>
<geneLocation type="chloroplast"/>
<name>RR19_SOYBN</name>
<keyword id="KW-0150">Chloroplast</keyword>
<keyword id="KW-0934">Plastid</keyword>
<keyword id="KW-1185">Reference proteome</keyword>
<keyword id="KW-0687">Ribonucleoprotein</keyword>
<keyword id="KW-0689">Ribosomal protein</keyword>
<keyword id="KW-0694">RNA-binding</keyword>
<keyword id="KW-0699">rRNA-binding</keyword>
<accession>P07816</accession>
<accession>Q2PMP6</accession>
<reference key="1">
    <citation type="journal article" date="1988" name="Nucleic Acids Res.">
        <title>The soybean chloroplast genome: complete sequence of the rps19 gene, including flanking parts containing exon 2 of rpl2 (upstream), but rpl22 (downstream).</title>
        <authorList>
            <person name="Spielmann A."/>
            <person name="Roux E."/>
            <person name="von Allmen J.-M."/>
            <person name="Stutz E."/>
        </authorList>
    </citation>
    <scope>NUCLEOTIDE SEQUENCE [GENOMIC DNA]</scope>
</reference>
<reference key="2">
    <citation type="journal article" date="2005" name="Plant Mol. Biol.">
        <title>Complete chloroplast genome sequence of Glycine max and comparative analyses with other legume genomes.</title>
        <authorList>
            <person name="Saski C."/>
            <person name="Lee S.-B."/>
            <person name="Daniell H."/>
            <person name="Wood T.C."/>
            <person name="Tomkins J."/>
            <person name="Kim H.-G."/>
            <person name="Jansen R.K."/>
        </authorList>
    </citation>
    <scope>NUCLEOTIDE SEQUENCE [LARGE SCALE GENOMIC DNA]</scope>
    <source>
        <strain>cv. PI 437654</strain>
    </source>
</reference>
<gene>
    <name type="primary">rps19</name>
</gene>
<proteinExistence type="inferred from homology"/>